<keyword id="KW-1185">Reference proteome</keyword>
<keyword id="KW-0687">Ribonucleoprotein</keyword>
<keyword id="KW-0689">Ribosomal protein</keyword>
<keyword id="KW-0694">RNA-binding</keyword>
<keyword id="KW-0699">rRNA-binding</keyword>
<feature type="chain" id="PRO_1000166474" description="Small ribosomal subunit protein uS17">
    <location>
        <begin position="1"/>
        <end position="93"/>
    </location>
</feature>
<gene>
    <name evidence="1" type="primary">rpsQ</name>
    <name type="ordered locus">cauri_0398</name>
</gene>
<comment type="function">
    <text evidence="1">One of the primary rRNA binding proteins, it binds specifically to the 5'-end of 16S ribosomal RNA.</text>
</comment>
<comment type="subunit">
    <text evidence="1">Part of the 30S ribosomal subunit.</text>
</comment>
<comment type="similarity">
    <text evidence="1">Belongs to the universal ribosomal protein uS17 family.</text>
</comment>
<accession>C3PKR1</accession>
<reference key="1">
    <citation type="journal article" date="2010" name="BMC Genomics">
        <title>Complete genome sequence and lifestyle of black-pigmented Corynebacterium aurimucosum ATCC 700975 (formerly C. nigricans CN-1) isolated from a vaginal swab of a woman with spontaneous abortion.</title>
        <authorList>
            <person name="Trost E."/>
            <person name="Gotker S."/>
            <person name="Schneider J."/>
            <person name="Schneiker-Bekel S."/>
            <person name="Szczepanowski R."/>
            <person name="Tilker A."/>
            <person name="Viehoever P."/>
            <person name="Arnold W."/>
            <person name="Bekel T."/>
            <person name="Blom J."/>
            <person name="Gartemann K.H."/>
            <person name="Linke B."/>
            <person name="Goesmann A."/>
            <person name="Puhler A."/>
            <person name="Shukla S.K."/>
            <person name="Tauch A."/>
        </authorList>
    </citation>
    <scope>NUCLEOTIDE SEQUENCE [LARGE SCALE GENOMIC DNA]</scope>
    <source>
        <strain>ATCC 700975 / DSM 44827 / CIP 107346 / CN-1</strain>
    </source>
</reference>
<protein>
    <recommendedName>
        <fullName evidence="1">Small ribosomal subunit protein uS17</fullName>
    </recommendedName>
    <alternativeName>
        <fullName evidence="2">30S ribosomal protein S17</fullName>
    </alternativeName>
</protein>
<proteinExistence type="inferred from homology"/>
<organism>
    <name type="scientific">Corynebacterium aurimucosum (strain ATCC 700975 / DSM 44827 / CIP 107346 / CN-1)</name>
    <name type="common">Corynebacterium nigricans</name>
    <dbReference type="NCBI Taxonomy" id="548476"/>
    <lineage>
        <taxon>Bacteria</taxon>
        <taxon>Bacillati</taxon>
        <taxon>Actinomycetota</taxon>
        <taxon>Actinomycetes</taxon>
        <taxon>Mycobacteriales</taxon>
        <taxon>Corynebacteriaceae</taxon>
        <taxon>Corynebacterium</taxon>
    </lineage>
</organism>
<evidence type="ECO:0000255" key="1">
    <source>
        <dbReference type="HAMAP-Rule" id="MF_01345"/>
    </source>
</evidence>
<evidence type="ECO:0000305" key="2"/>
<dbReference type="EMBL" id="CP001601">
    <property type="protein sequence ID" value="ACP31997.1"/>
    <property type="molecule type" value="Genomic_DNA"/>
</dbReference>
<dbReference type="RefSeq" id="WP_010189641.1">
    <property type="nucleotide sequence ID" value="NZ_ACLH01000066.1"/>
</dbReference>
<dbReference type="SMR" id="C3PKR1"/>
<dbReference type="STRING" id="548476.cauri_0398"/>
<dbReference type="GeneID" id="31923017"/>
<dbReference type="KEGG" id="car:cauri_0398"/>
<dbReference type="eggNOG" id="COG0186">
    <property type="taxonomic scope" value="Bacteria"/>
</dbReference>
<dbReference type="HOGENOM" id="CLU_073626_1_0_11"/>
<dbReference type="OrthoDB" id="9811714at2"/>
<dbReference type="Proteomes" id="UP000002077">
    <property type="component" value="Chromosome"/>
</dbReference>
<dbReference type="GO" id="GO:0022627">
    <property type="term" value="C:cytosolic small ribosomal subunit"/>
    <property type="evidence" value="ECO:0007669"/>
    <property type="project" value="TreeGrafter"/>
</dbReference>
<dbReference type="GO" id="GO:0019843">
    <property type="term" value="F:rRNA binding"/>
    <property type="evidence" value="ECO:0007669"/>
    <property type="project" value="UniProtKB-UniRule"/>
</dbReference>
<dbReference type="GO" id="GO:0003735">
    <property type="term" value="F:structural constituent of ribosome"/>
    <property type="evidence" value="ECO:0007669"/>
    <property type="project" value="InterPro"/>
</dbReference>
<dbReference type="GO" id="GO:0006412">
    <property type="term" value="P:translation"/>
    <property type="evidence" value="ECO:0007669"/>
    <property type="project" value="UniProtKB-UniRule"/>
</dbReference>
<dbReference type="CDD" id="cd00364">
    <property type="entry name" value="Ribosomal_uS17"/>
    <property type="match status" value="1"/>
</dbReference>
<dbReference type="Gene3D" id="2.40.50.140">
    <property type="entry name" value="Nucleic acid-binding proteins"/>
    <property type="match status" value="1"/>
</dbReference>
<dbReference type="HAMAP" id="MF_01345_B">
    <property type="entry name" value="Ribosomal_uS17_B"/>
    <property type="match status" value="1"/>
</dbReference>
<dbReference type="InterPro" id="IPR012340">
    <property type="entry name" value="NA-bd_OB-fold"/>
</dbReference>
<dbReference type="InterPro" id="IPR000266">
    <property type="entry name" value="Ribosomal_uS17"/>
</dbReference>
<dbReference type="InterPro" id="IPR019984">
    <property type="entry name" value="Ribosomal_uS17_bact/chlr"/>
</dbReference>
<dbReference type="InterPro" id="IPR019979">
    <property type="entry name" value="Ribosomal_uS17_CS"/>
</dbReference>
<dbReference type="NCBIfam" id="NF004123">
    <property type="entry name" value="PRK05610.1"/>
    <property type="match status" value="1"/>
</dbReference>
<dbReference type="NCBIfam" id="TIGR03635">
    <property type="entry name" value="uS17_bact"/>
    <property type="match status" value="1"/>
</dbReference>
<dbReference type="PANTHER" id="PTHR10744">
    <property type="entry name" value="40S RIBOSOMAL PROTEIN S11 FAMILY MEMBER"/>
    <property type="match status" value="1"/>
</dbReference>
<dbReference type="PANTHER" id="PTHR10744:SF1">
    <property type="entry name" value="SMALL RIBOSOMAL SUBUNIT PROTEIN US17M"/>
    <property type="match status" value="1"/>
</dbReference>
<dbReference type="Pfam" id="PF00366">
    <property type="entry name" value="Ribosomal_S17"/>
    <property type="match status" value="1"/>
</dbReference>
<dbReference type="PRINTS" id="PR00973">
    <property type="entry name" value="RIBOSOMALS17"/>
</dbReference>
<dbReference type="SUPFAM" id="SSF50249">
    <property type="entry name" value="Nucleic acid-binding proteins"/>
    <property type="match status" value="1"/>
</dbReference>
<dbReference type="PROSITE" id="PS00056">
    <property type="entry name" value="RIBOSOMAL_S17"/>
    <property type="match status" value="1"/>
</dbReference>
<sequence length="93" mass="10571">MSEANVNTKKEKGARKTRTGIVVSDKMNKTIVVELEDRKQHALYGKIMRTNKKVKAHDENETAGIGDRVLIAETRPLSKDKHFRLVEIVEKAK</sequence>
<name>RS17_CORA7</name>